<evidence type="ECO:0000255" key="1">
    <source>
        <dbReference type="HAMAP-Rule" id="MF_03054"/>
    </source>
</evidence>
<evidence type="ECO:0000305" key="2"/>
<name>CTU2A_XENLA</name>
<reference key="1">
    <citation type="submission" date="2006-10" db="EMBL/GenBank/DDBJ databases">
        <authorList>
            <consortium name="NIH - Xenopus Gene Collection (XGC) project"/>
        </authorList>
    </citation>
    <scope>NUCLEOTIDE SEQUENCE [LARGE SCALE MRNA]</scope>
    <source>
        <tissue>Embryo</tissue>
        <tissue>Ovary</tissue>
    </source>
</reference>
<feature type="chain" id="PRO_0000289180" description="Cytoplasmic tRNA 2-thiolation protein 2-A">
    <location>
        <begin position="1"/>
        <end position="512"/>
    </location>
</feature>
<feature type="sequence conflict" description="In Ref. 1; AAH97664." evidence="2" ref="1">
    <original>P</original>
    <variation>H</variation>
    <location>
        <position position="456"/>
    </location>
</feature>
<comment type="function">
    <text evidence="1">Plays a central role in 2-thiolation of mcm(5)S(2)U at tRNA wobble positions of tRNA(Lys), tRNA(Glu) and tRNA(Gln). May act by forming a heterodimer with ctu1/atpbd3 that ligates sulfur from thiocarboxylated urm1 onto the uridine of tRNAs at wobble position.</text>
</comment>
<comment type="pathway">
    <text evidence="1">tRNA modification; 5-methoxycarbonylmethyl-2-thiouridine-tRNA biosynthesis.</text>
</comment>
<comment type="subcellular location">
    <subcellularLocation>
        <location evidence="1">Cytoplasm</location>
    </subcellularLocation>
</comment>
<comment type="similarity">
    <text evidence="1">Belongs to the CTU2/NCS2 family.</text>
</comment>
<comment type="sequence caution" evidence="2">
    <conflict type="erroneous initiation">
        <sequence resource="EMBL-CDS" id="AAH97664"/>
    </conflict>
</comment>
<keyword id="KW-0963">Cytoplasm</keyword>
<keyword id="KW-1185">Reference proteome</keyword>
<keyword id="KW-0819">tRNA processing</keyword>
<accession>Q08B12</accession>
<accession>Q4V7Y1</accession>
<sequence length="512" mass="57231">MCEEGETYCPEVKDAKQGKSLGKICMKCKESSAALLIRAGDAFCKSCFKEYFVHKFRATLGKNRVIYPGEKVLLAYSGGPSSSAMVRQVQEGLSRDAPKKLRFVPGILFIDEGTACGMSWEERQQILSEICSVLQQTKIPFHIVSLEQVFSLPGSVLQRGAPEQRPNYKEEVDRFLVQEREQGDAGCSEMLERLEVTDSDSPGSSDKMYQSTCSHPPDMHTQKLKQLFASAKTLTAKQQLLHTLRSHLILHIARTCGYSKVMTGESCTRLSIRLLSNVSLGRGAFLPLDTGFCDSRYGDVDIIRPMREYSSKEIAYYNRFFNVSPIFIPALDTKASENSSIQHLTEVFVNRLQADFPSTVSTLYRTSEKLNVSKIDADQETCAKDRCLLCLSPLDTQAGKASAFSATQLSHHLSQKIPMKSNDLANNSDKSCCQGGQGCKEAGYGDTCQSRALQTPSFVHMLCYSCRLTVKDMQSLDVLPQYVLHEAEHRCHRTEMRKEIQEFLLDEDDGDS</sequence>
<gene>
    <name type="primary">ctu2-a</name>
    <name type="synonym">ncs2-a</name>
</gene>
<organism>
    <name type="scientific">Xenopus laevis</name>
    <name type="common">African clawed frog</name>
    <dbReference type="NCBI Taxonomy" id="8355"/>
    <lineage>
        <taxon>Eukaryota</taxon>
        <taxon>Metazoa</taxon>
        <taxon>Chordata</taxon>
        <taxon>Craniata</taxon>
        <taxon>Vertebrata</taxon>
        <taxon>Euteleostomi</taxon>
        <taxon>Amphibia</taxon>
        <taxon>Batrachia</taxon>
        <taxon>Anura</taxon>
        <taxon>Pipoidea</taxon>
        <taxon>Pipidae</taxon>
        <taxon>Xenopodinae</taxon>
        <taxon>Xenopus</taxon>
        <taxon>Xenopus</taxon>
    </lineage>
</organism>
<protein>
    <recommendedName>
        <fullName evidence="1">Cytoplasmic tRNA 2-thiolation protein 2-A</fullName>
    </recommendedName>
</protein>
<proteinExistence type="evidence at transcript level"/>
<dbReference type="EMBL" id="BC097664">
    <property type="protein sequence ID" value="AAH97664.1"/>
    <property type="status" value="ALT_INIT"/>
    <property type="molecule type" value="mRNA"/>
</dbReference>
<dbReference type="EMBL" id="BC124921">
    <property type="protein sequence ID" value="AAI24922.1"/>
    <property type="molecule type" value="mRNA"/>
</dbReference>
<dbReference type="RefSeq" id="NP_001167511.1">
    <property type="nucleotide sequence ID" value="NM_001174040.1"/>
</dbReference>
<dbReference type="BioGRID" id="1079194">
    <property type="interactions" value="1"/>
</dbReference>
<dbReference type="IntAct" id="Q08B12">
    <property type="interactions" value="1"/>
</dbReference>
<dbReference type="DNASU" id="100381163"/>
<dbReference type="GeneID" id="100381163"/>
<dbReference type="KEGG" id="xla:100381163"/>
<dbReference type="AGR" id="Xenbase:XB-GENE-6466467"/>
<dbReference type="CTD" id="100381163"/>
<dbReference type="Xenbase" id="XB-GENE-6466467">
    <property type="gene designation" value="ctu2.L"/>
</dbReference>
<dbReference type="OrthoDB" id="25129at2759"/>
<dbReference type="UniPathway" id="UPA00988"/>
<dbReference type="Proteomes" id="UP000186698">
    <property type="component" value="Chromosome 4L"/>
</dbReference>
<dbReference type="Bgee" id="100381163">
    <property type="expression patterns" value="Expressed in egg cell and 19 other cell types or tissues"/>
</dbReference>
<dbReference type="GO" id="GO:0005829">
    <property type="term" value="C:cytosol"/>
    <property type="evidence" value="ECO:0000250"/>
    <property type="project" value="UniProtKB"/>
</dbReference>
<dbReference type="GO" id="GO:0016779">
    <property type="term" value="F:nucleotidyltransferase activity"/>
    <property type="evidence" value="ECO:0007669"/>
    <property type="project" value="UniProtKB-UniRule"/>
</dbReference>
<dbReference type="GO" id="GO:0016783">
    <property type="term" value="F:sulfurtransferase activity"/>
    <property type="evidence" value="ECO:0000318"/>
    <property type="project" value="GO_Central"/>
</dbReference>
<dbReference type="GO" id="GO:0000049">
    <property type="term" value="F:tRNA binding"/>
    <property type="evidence" value="ECO:0007669"/>
    <property type="project" value="InterPro"/>
</dbReference>
<dbReference type="GO" id="GO:0032447">
    <property type="term" value="P:protein urmylation"/>
    <property type="evidence" value="ECO:0007669"/>
    <property type="project" value="UniProtKB-UniRule"/>
</dbReference>
<dbReference type="GO" id="GO:0034227">
    <property type="term" value="P:tRNA thio-modification"/>
    <property type="evidence" value="ECO:0000250"/>
    <property type="project" value="UniProtKB"/>
</dbReference>
<dbReference type="GO" id="GO:0002143">
    <property type="term" value="P:tRNA wobble position uridine thiolation"/>
    <property type="evidence" value="ECO:0000318"/>
    <property type="project" value="GO_Central"/>
</dbReference>
<dbReference type="GO" id="GO:0002098">
    <property type="term" value="P:tRNA wobble uridine modification"/>
    <property type="evidence" value="ECO:0000250"/>
    <property type="project" value="UniProtKB"/>
</dbReference>
<dbReference type="Gene3D" id="3.40.50.620">
    <property type="entry name" value="HUPs"/>
    <property type="match status" value="1"/>
</dbReference>
<dbReference type="HAMAP" id="MF_03054">
    <property type="entry name" value="CTU2"/>
    <property type="match status" value="1"/>
</dbReference>
<dbReference type="InterPro" id="IPR019407">
    <property type="entry name" value="CTU2"/>
</dbReference>
<dbReference type="InterPro" id="IPR014729">
    <property type="entry name" value="Rossmann-like_a/b/a_fold"/>
</dbReference>
<dbReference type="PANTHER" id="PTHR20882">
    <property type="entry name" value="CYTOPLASMIC TRNA 2-THIOLATION PROTEIN 2"/>
    <property type="match status" value="1"/>
</dbReference>
<dbReference type="PANTHER" id="PTHR20882:SF14">
    <property type="entry name" value="CYTOPLASMIC TRNA 2-THIOLATION PROTEIN 2"/>
    <property type="match status" value="1"/>
</dbReference>
<dbReference type="Pfam" id="PF10288">
    <property type="entry name" value="CTU2"/>
    <property type="match status" value="1"/>
</dbReference>
<dbReference type="SUPFAM" id="SSF52402">
    <property type="entry name" value="Adenine nucleotide alpha hydrolases-like"/>
    <property type="match status" value="1"/>
</dbReference>